<sequence>MLMPKRVKYRREHRGKMRGRAKGGTEVAFGEFGLQAQAASWITNRQIEAARRAMTRYMKRGGKVWIKIFPSKPYTAKPLEVRMGSGKGAPEGWVAVVKPGKIMFEIAGVSEEVAREALRLAAHKLPVKCKFVKREENGGESNEN</sequence>
<dbReference type="EMBL" id="CP000227">
    <property type="protein sequence ID" value="ACM10645.1"/>
    <property type="molecule type" value="Genomic_DNA"/>
</dbReference>
<dbReference type="SMR" id="B9IZK1"/>
<dbReference type="KEGG" id="bcq:BCQ_0130"/>
<dbReference type="HOGENOM" id="CLU_078858_2_1_9"/>
<dbReference type="Proteomes" id="UP000000441">
    <property type="component" value="Chromosome"/>
</dbReference>
<dbReference type="GO" id="GO:0022625">
    <property type="term" value="C:cytosolic large ribosomal subunit"/>
    <property type="evidence" value="ECO:0007669"/>
    <property type="project" value="TreeGrafter"/>
</dbReference>
<dbReference type="GO" id="GO:0019843">
    <property type="term" value="F:rRNA binding"/>
    <property type="evidence" value="ECO:0007669"/>
    <property type="project" value="UniProtKB-UniRule"/>
</dbReference>
<dbReference type="GO" id="GO:0003735">
    <property type="term" value="F:structural constituent of ribosome"/>
    <property type="evidence" value="ECO:0007669"/>
    <property type="project" value="InterPro"/>
</dbReference>
<dbReference type="GO" id="GO:0000049">
    <property type="term" value="F:tRNA binding"/>
    <property type="evidence" value="ECO:0007669"/>
    <property type="project" value="UniProtKB-KW"/>
</dbReference>
<dbReference type="GO" id="GO:0006412">
    <property type="term" value="P:translation"/>
    <property type="evidence" value="ECO:0007669"/>
    <property type="project" value="UniProtKB-UniRule"/>
</dbReference>
<dbReference type="CDD" id="cd01433">
    <property type="entry name" value="Ribosomal_L16_L10e"/>
    <property type="match status" value="1"/>
</dbReference>
<dbReference type="FunFam" id="3.90.1170.10:FF:000001">
    <property type="entry name" value="50S ribosomal protein L16"/>
    <property type="match status" value="1"/>
</dbReference>
<dbReference type="Gene3D" id="3.90.1170.10">
    <property type="entry name" value="Ribosomal protein L10e/L16"/>
    <property type="match status" value="1"/>
</dbReference>
<dbReference type="HAMAP" id="MF_01342">
    <property type="entry name" value="Ribosomal_uL16"/>
    <property type="match status" value="1"/>
</dbReference>
<dbReference type="InterPro" id="IPR047873">
    <property type="entry name" value="Ribosomal_uL16"/>
</dbReference>
<dbReference type="InterPro" id="IPR000114">
    <property type="entry name" value="Ribosomal_uL16_bact-type"/>
</dbReference>
<dbReference type="InterPro" id="IPR020798">
    <property type="entry name" value="Ribosomal_uL16_CS"/>
</dbReference>
<dbReference type="InterPro" id="IPR016180">
    <property type="entry name" value="Ribosomal_uL16_dom"/>
</dbReference>
<dbReference type="InterPro" id="IPR036920">
    <property type="entry name" value="Ribosomal_uL16_sf"/>
</dbReference>
<dbReference type="NCBIfam" id="TIGR01164">
    <property type="entry name" value="rplP_bact"/>
    <property type="match status" value="1"/>
</dbReference>
<dbReference type="PANTHER" id="PTHR12220">
    <property type="entry name" value="50S/60S RIBOSOMAL PROTEIN L16"/>
    <property type="match status" value="1"/>
</dbReference>
<dbReference type="PANTHER" id="PTHR12220:SF13">
    <property type="entry name" value="LARGE RIBOSOMAL SUBUNIT PROTEIN UL16M"/>
    <property type="match status" value="1"/>
</dbReference>
<dbReference type="Pfam" id="PF00252">
    <property type="entry name" value="Ribosomal_L16"/>
    <property type="match status" value="1"/>
</dbReference>
<dbReference type="PRINTS" id="PR00060">
    <property type="entry name" value="RIBOSOMALL16"/>
</dbReference>
<dbReference type="SUPFAM" id="SSF54686">
    <property type="entry name" value="Ribosomal protein L16p/L10e"/>
    <property type="match status" value="1"/>
</dbReference>
<dbReference type="PROSITE" id="PS00586">
    <property type="entry name" value="RIBOSOMAL_L16_1"/>
    <property type="match status" value="1"/>
</dbReference>
<dbReference type="PROSITE" id="PS00701">
    <property type="entry name" value="RIBOSOMAL_L16_2"/>
    <property type="match status" value="1"/>
</dbReference>
<feature type="chain" id="PRO_1000166336" description="Large ribosomal subunit protein uL16">
    <location>
        <begin position="1"/>
        <end position="144"/>
    </location>
</feature>
<protein>
    <recommendedName>
        <fullName evidence="1">Large ribosomal subunit protein uL16</fullName>
    </recommendedName>
    <alternativeName>
        <fullName evidence="2">50S ribosomal protein L16</fullName>
    </alternativeName>
</protein>
<keyword id="KW-0687">Ribonucleoprotein</keyword>
<keyword id="KW-0689">Ribosomal protein</keyword>
<keyword id="KW-0694">RNA-binding</keyword>
<keyword id="KW-0699">rRNA-binding</keyword>
<keyword id="KW-0820">tRNA-binding</keyword>
<comment type="function">
    <text evidence="1">Binds 23S rRNA and is also seen to make contacts with the A and possibly P site tRNAs.</text>
</comment>
<comment type="subunit">
    <text evidence="1">Part of the 50S ribosomal subunit.</text>
</comment>
<comment type="similarity">
    <text evidence="1">Belongs to the universal ribosomal protein uL16 family.</text>
</comment>
<gene>
    <name evidence="1" type="primary">rplP</name>
    <name type="ordered locus">BCQ_0130</name>
</gene>
<evidence type="ECO:0000255" key="1">
    <source>
        <dbReference type="HAMAP-Rule" id="MF_01342"/>
    </source>
</evidence>
<evidence type="ECO:0000305" key="2"/>
<reference key="1">
    <citation type="journal article" date="2009" name="J. Bacteriol.">
        <title>Complete genome sequence of the extremophilic Bacillus cereus strain Q1 with industrial applications.</title>
        <authorList>
            <person name="Xiong Z."/>
            <person name="Jiang Y."/>
            <person name="Qi D."/>
            <person name="Lu H."/>
            <person name="Yang F."/>
            <person name="Yang J."/>
            <person name="Chen L."/>
            <person name="Sun L."/>
            <person name="Xu X."/>
            <person name="Xue Y."/>
            <person name="Zhu Y."/>
            <person name="Jin Q."/>
        </authorList>
    </citation>
    <scope>NUCLEOTIDE SEQUENCE [LARGE SCALE GENOMIC DNA]</scope>
    <source>
        <strain>Q1</strain>
    </source>
</reference>
<name>RL16_BACCQ</name>
<accession>B9IZK1</accession>
<organism>
    <name type="scientific">Bacillus cereus (strain Q1)</name>
    <dbReference type="NCBI Taxonomy" id="361100"/>
    <lineage>
        <taxon>Bacteria</taxon>
        <taxon>Bacillati</taxon>
        <taxon>Bacillota</taxon>
        <taxon>Bacilli</taxon>
        <taxon>Bacillales</taxon>
        <taxon>Bacillaceae</taxon>
        <taxon>Bacillus</taxon>
        <taxon>Bacillus cereus group</taxon>
    </lineage>
</organism>
<proteinExistence type="inferred from homology"/>